<accession>B0UTA0</accession>
<gene>
    <name evidence="1" type="primary">rpsB</name>
    <name type="ordered locus">HSM_1019</name>
</gene>
<feature type="chain" id="PRO_1000078883" description="Small ribosomal subunit protein uS2">
    <location>
        <begin position="1"/>
        <end position="239"/>
    </location>
</feature>
<evidence type="ECO:0000255" key="1">
    <source>
        <dbReference type="HAMAP-Rule" id="MF_00291"/>
    </source>
</evidence>
<evidence type="ECO:0000305" key="2"/>
<dbReference type="EMBL" id="CP000947">
    <property type="protein sequence ID" value="ACA30730.1"/>
    <property type="molecule type" value="Genomic_DNA"/>
</dbReference>
<dbReference type="RefSeq" id="WP_011609243.1">
    <property type="nucleotide sequence ID" value="NC_010519.1"/>
</dbReference>
<dbReference type="SMR" id="B0UTA0"/>
<dbReference type="STRING" id="228400.HSM_1019"/>
<dbReference type="GeneID" id="31487318"/>
<dbReference type="KEGG" id="hsm:HSM_1019"/>
<dbReference type="HOGENOM" id="CLU_040318_1_2_6"/>
<dbReference type="GO" id="GO:0022627">
    <property type="term" value="C:cytosolic small ribosomal subunit"/>
    <property type="evidence" value="ECO:0007669"/>
    <property type="project" value="TreeGrafter"/>
</dbReference>
<dbReference type="GO" id="GO:0003735">
    <property type="term" value="F:structural constituent of ribosome"/>
    <property type="evidence" value="ECO:0007669"/>
    <property type="project" value="InterPro"/>
</dbReference>
<dbReference type="GO" id="GO:0006412">
    <property type="term" value="P:translation"/>
    <property type="evidence" value="ECO:0007669"/>
    <property type="project" value="UniProtKB-UniRule"/>
</dbReference>
<dbReference type="CDD" id="cd01425">
    <property type="entry name" value="RPS2"/>
    <property type="match status" value="1"/>
</dbReference>
<dbReference type="FunFam" id="1.10.287.610:FF:000001">
    <property type="entry name" value="30S ribosomal protein S2"/>
    <property type="match status" value="1"/>
</dbReference>
<dbReference type="Gene3D" id="3.40.50.10490">
    <property type="entry name" value="Glucose-6-phosphate isomerase like protein, domain 1"/>
    <property type="match status" value="1"/>
</dbReference>
<dbReference type="Gene3D" id="1.10.287.610">
    <property type="entry name" value="Helix hairpin bin"/>
    <property type="match status" value="1"/>
</dbReference>
<dbReference type="HAMAP" id="MF_00291_B">
    <property type="entry name" value="Ribosomal_uS2_B"/>
    <property type="match status" value="1"/>
</dbReference>
<dbReference type="InterPro" id="IPR001865">
    <property type="entry name" value="Ribosomal_uS2"/>
</dbReference>
<dbReference type="InterPro" id="IPR005706">
    <property type="entry name" value="Ribosomal_uS2_bac/mit/plastid"/>
</dbReference>
<dbReference type="InterPro" id="IPR018130">
    <property type="entry name" value="Ribosomal_uS2_CS"/>
</dbReference>
<dbReference type="InterPro" id="IPR023591">
    <property type="entry name" value="Ribosomal_uS2_flav_dom_sf"/>
</dbReference>
<dbReference type="NCBIfam" id="TIGR01011">
    <property type="entry name" value="rpsB_bact"/>
    <property type="match status" value="1"/>
</dbReference>
<dbReference type="PANTHER" id="PTHR12534">
    <property type="entry name" value="30S RIBOSOMAL PROTEIN S2 PROKARYOTIC AND ORGANELLAR"/>
    <property type="match status" value="1"/>
</dbReference>
<dbReference type="PANTHER" id="PTHR12534:SF0">
    <property type="entry name" value="SMALL RIBOSOMAL SUBUNIT PROTEIN US2M"/>
    <property type="match status" value="1"/>
</dbReference>
<dbReference type="Pfam" id="PF00318">
    <property type="entry name" value="Ribosomal_S2"/>
    <property type="match status" value="1"/>
</dbReference>
<dbReference type="PRINTS" id="PR00395">
    <property type="entry name" value="RIBOSOMALS2"/>
</dbReference>
<dbReference type="SUPFAM" id="SSF52313">
    <property type="entry name" value="Ribosomal protein S2"/>
    <property type="match status" value="1"/>
</dbReference>
<dbReference type="PROSITE" id="PS00962">
    <property type="entry name" value="RIBOSOMAL_S2_1"/>
    <property type="match status" value="1"/>
</dbReference>
<dbReference type="PROSITE" id="PS00963">
    <property type="entry name" value="RIBOSOMAL_S2_2"/>
    <property type="match status" value="1"/>
</dbReference>
<sequence length="239" mass="26513">MAQVSMRDMLQAGVHFGHQTRYWNPKMKPFIFGPRNGVHIINLEKTVPMFNEALVELTRIASNNGRILFVGTKRAASEVVKAAALDCQQYYVNHRWLGGMLTNWKTVRQSIKRLKDLETQSQDGTFDKLTKKEALVRTREMEKLELSLGGIKDMGGLPDAIFVIGADHEHIAIKEANNLGIPVFAIVDTNSSPDGVDFVIPGNDDASRAIQLYLSAATTAVKEGRNQETVTEEVFAAAE</sequence>
<reference key="1">
    <citation type="submission" date="2008-02" db="EMBL/GenBank/DDBJ databases">
        <title>Complete sequence of Haemophilus somnus 2336.</title>
        <authorList>
            <consortium name="US DOE Joint Genome Institute"/>
            <person name="Siddaramappa S."/>
            <person name="Duncan A.J."/>
            <person name="Challacombe J.F."/>
            <person name="Rainey D."/>
            <person name="Gillaspy A.F."/>
            <person name="Carson M."/>
            <person name="Gipson J."/>
            <person name="Gipson M."/>
            <person name="Bruce D."/>
            <person name="Detter J.C."/>
            <person name="Han C.S."/>
            <person name="Land M."/>
            <person name="Tapia R."/>
            <person name="Thompson L.S."/>
            <person name="Orvis J."/>
            <person name="Zaitshik J."/>
            <person name="Barnes G."/>
            <person name="Brettin T.S."/>
            <person name="Dyer D.W."/>
            <person name="Inzana T.J."/>
        </authorList>
    </citation>
    <scope>NUCLEOTIDE SEQUENCE [LARGE SCALE GENOMIC DNA]</scope>
    <source>
        <strain>2336</strain>
    </source>
</reference>
<name>RS2_HISS2</name>
<comment type="similarity">
    <text evidence="1">Belongs to the universal ribosomal protein uS2 family.</text>
</comment>
<proteinExistence type="inferred from homology"/>
<keyword id="KW-0687">Ribonucleoprotein</keyword>
<keyword id="KW-0689">Ribosomal protein</keyword>
<organism>
    <name type="scientific">Histophilus somni (strain 2336)</name>
    <name type="common">Haemophilus somnus</name>
    <dbReference type="NCBI Taxonomy" id="228400"/>
    <lineage>
        <taxon>Bacteria</taxon>
        <taxon>Pseudomonadati</taxon>
        <taxon>Pseudomonadota</taxon>
        <taxon>Gammaproteobacteria</taxon>
        <taxon>Pasteurellales</taxon>
        <taxon>Pasteurellaceae</taxon>
        <taxon>Histophilus</taxon>
    </lineage>
</organism>
<protein>
    <recommendedName>
        <fullName evidence="1">Small ribosomal subunit protein uS2</fullName>
    </recommendedName>
    <alternativeName>
        <fullName evidence="2">30S ribosomal protein S2</fullName>
    </alternativeName>
</protein>